<keyword id="KW-0963">Cytoplasm</keyword>
<keyword id="KW-0269">Exonuclease</keyword>
<keyword id="KW-0378">Hydrolase</keyword>
<keyword id="KW-0540">Nuclease</keyword>
<organism>
    <name type="scientific">Bacillus anthracis (strain A0248)</name>
    <dbReference type="NCBI Taxonomy" id="592021"/>
    <lineage>
        <taxon>Bacteria</taxon>
        <taxon>Bacillati</taxon>
        <taxon>Bacillota</taxon>
        <taxon>Bacilli</taxon>
        <taxon>Bacillales</taxon>
        <taxon>Bacillaceae</taxon>
        <taxon>Bacillus</taxon>
        <taxon>Bacillus cereus group</taxon>
    </lineage>
</organism>
<evidence type="ECO:0000255" key="1">
    <source>
        <dbReference type="HAMAP-Rule" id="MF_00337"/>
    </source>
</evidence>
<name>EX7S_BACAA</name>
<accession>C3P7V8</accession>
<dbReference type="EC" id="3.1.11.6" evidence="1"/>
<dbReference type="EMBL" id="CP001598">
    <property type="protein sequence ID" value="ACQ48074.1"/>
    <property type="molecule type" value="Genomic_DNA"/>
</dbReference>
<dbReference type="RefSeq" id="WP_000428423.1">
    <property type="nucleotide sequence ID" value="NC_012659.1"/>
</dbReference>
<dbReference type="SMR" id="C3P7V8"/>
<dbReference type="GeneID" id="93006923"/>
<dbReference type="KEGG" id="bai:BAA_4420"/>
<dbReference type="HOGENOM" id="CLU_145918_3_1_9"/>
<dbReference type="GO" id="GO:0005829">
    <property type="term" value="C:cytosol"/>
    <property type="evidence" value="ECO:0007669"/>
    <property type="project" value="TreeGrafter"/>
</dbReference>
<dbReference type="GO" id="GO:0009318">
    <property type="term" value="C:exodeoxyribonuclease VII complex"/>
    <property type="evidence" value="ECO:0007669"/>
    <property type="project" value="InterPro"/>
</dbReference>
<dbReference type="GO" id="GO:0008855">
    <property type="term" value="F:exodeoxyribonuclease VII activity"/>
    <property type="evidence" value="ECO:0007669"/>
    <property type="project" value="UniProtKB-UniRule"/>
</dbReference>
<dbReference type="GO" id="GO:0006308">
    <property type="term" value="P:DNA catabolic process"/>
    <property type="evidence" value="ECO:0007669"/>
    <property type="project" value="UniProtKB-UniRule"/>
</dbReference>
<dbReference type="FunFam" id="1.10.287.1040:FF:000002">
    <property type="entry name" value="Exodeoxyribonuclease 7 small subunit"/>
    <property type="match status" value="1"/>
</dbReference>
<dbReference type="Gene3D" id="1.10.287.1040">
    <property type="entry name" value="Exonuclease VII, small subunit"/>
    <property type="match status" value="1"/>
</dbReference>
<dbReference type="HAMAP" id="MF_00337">
    <property type="entry name" value="Exonuc_7_S"/>
    <property type="match status" value="1"/>
</dbReference>
<dbReference type="InterPro" id="IPR003761">
    <property type="entry name" value="Exonuc_VII_S"/>
</dbReference>
<dbReference type="InterPro" id="IPR037004">
    <property type="entry name" value="Exonuc_VII_ssu_sf"/>
</dbReference>
<dbReference type="NCBIfam" id="NF010666">
    <property type="entry name" value="PRK14063.1"/>
    <property type="match status" value="1"/>
</dbReference>
<dbReference type="NCBIfam" id="TIGR01280">
    <property type="entry name" value="xseB"/>
    <property type="match status" value="1"/>
</dbReference>
<dbReference type="PANTHER" id="PTHR34137">
    <property type="entry name" value="EXODEOXYRIBONUCLEASE 7 SMALL SUBUNIT"/>
    <property type="match status" value="1"/>
</dbReference>
<dbReference type="PANTHER" id="PTHR34137:SF1">
    <property type="entry name" value="EXODEOXYRIBONUCLEASE 7 SMALL SUBUNIT"/>
    <property type="match status" value="1"/>
</dbReference>
<dbReference type="Pfam" id="PF02609">
    <property type="entry name" value="Exonuc_VII_S"/>
    <property type="match status" value="1"/>
</dbReference>
<dbReference type="PIRSF" id="PIRSF006488">
    <property type="entry name" value="Exonuc_VII_S"/>
    <property type="match status" value="1"/>
</dbReference>
<dbReference type="SUPFAM" id="SSF116842">
    <property type="entry name" value="XseB-like"/>
    <property type="match status" value="1"/>
</dbReference>
<proteinExistence type="inferred from homology"/>
<gene>
    <name evidence="1" type="primary">xseB</name>
    <name type="ordered locus">BAA_4420</name>
</gene>
<feature type="chain" id="PRO_1000200241" description="Exodeoxyribonuclease 7 small subunit">
    <location>
        <begin position="1"/>
        <end position="76"/>
    </location>
</feature>
<comment type="function">
    <text evidence="1">Bidirectionally degrades single-stranded DNA into large acid-insoluble oligonucleotides, which are then degraded further into small acid-soluble oligonucleotides.</text>
</comment>
<comment type="catalytic activity">
    <reaction evidence="1">
        <text>Exonucleolytic cleavage in either 5'- to 3'- or 3'- to 5'-direction to yield nucleoside 5'-phosphates.</text>
        <dbReference type="EC" id="3.1.11.6"/>
    </reaction>
</comment>
<comment type="subunit">
    <text evidence="1">Heterooligomer composed of large and small subunits.</text>
</comment>
<comment type="subcellular location">
    <subcellularLocation>
        <location evidence="1">Cytoplasm</location>
    </subcellularLocation>
</comment>
<comment type="similarity">
    <text evidence="1">Belongs to the XseB family.</text>
</comment>
<protein>
    <recommendedName>
        <fullName evidence="1">Exodeoxyribonuclease 7 small subunit</fullName>
        <ecNumber evidence="1">3.1.11.6</ecNumber>
    </recommendedName>
    <alternativeName>
        <fullName evidence="1">Exodeoxyribonuclease VII small subunit</fullName>
        <shortName evidence="1">Exonuclease VII small subunit</shortName>
    </alternativeName>
</protein>
<reference key="1">
    <citation type="submission" date="2009-04" db="EMBL/GenBank/DDBJ databases">
        <title>Genome sequence of Bacillus anthracis A0248.</title>
        <authorList>
            <person name="Dodson R.J."/>
            <person name="Munk A.C."/>
            <person name="Bruce D."/>
            <person name="Detter C."/>
            <person name="Tapia R."/>
            <person name="Sutton G."/>
            <person name="Sims D."/>
            <person name="Brettin T."/>
        </authorList>
    </citation>
    <scope>NUCLEOTIDE SEQUENCE [LARGE SCALE GENOMIC DNA]</scope>
    <source>
        <strain>A0248</strain>
    </source>
</reference>
<sequence length="76" mass="8516">MENKLSFEEAISQLEHLVSKLEQGDVPLEEAISYFKEGMELSKLCDEKLKNVQEQMAVILGEDGELEPFTALGDEA</sequence>